<name>36010_ASFP4</name>
<dbReference type="EMBL" id="AY261363">
    <property type="status" value="NOT_ANNOTATED_CDS"/>
    <property type="molecule type" value="Genomic_DNA"/>
</dbReference>
<dbReference type="SMR" id="P0C9P5"/>
<dbReference type="Proteomes" id="UP000000859">
    <property type="component" value="Segment"/>
</dbReference>
<dbReference type="GO" id="GO:0033644">
    <property type="term" value="C:host cell membrane"/>
    <property type="evidence" value="ECO:0007669"/>
    <property type="project" value="UniProtKB-SubCell"/>
</dbReference>
<dbReference type="GO" id="GO:0016020">
    <property type="term" value="C:membrane"/>
    <property type="evidence" value="ECO:0007669"/>
    <property type="project" value="UniProtKB-KW"/>
</dbReference>
<dbReference type="GO" id="GO:0042330">
    <property type="term" value="P:taxis"/>
    <property type="evidence" value="ECO:0007669"/>
    <property type="project" value="InterPro"/>
</dbReference>
<dbReference type="InterPro" id="IPR002110">
    <property type="entry name" value="Ankyrin_rpt"/>
</dbReference>
<dbReference type="InterPro" id="IPR036770">
    <property type="entry name" value="Ankyrin_rpt-contain_sf"/>
</dbReference>
<dbReference type="InterPro" id="IPR002595">
    <property type="entry name" value="ASFV_MGF360"/>
</dbReference>
<dbReference type="Pfam" id="PF01671">
    <property type="entry name" value="ASFV_360"/>
    <property type="match status" value="1"/>
</dbReference>
<dbReference type="SUPFAM" id="SSF48403">
    <property type="entry name" value="Ankyrin repeat"/>
    <property type="match status" value="1"/>
</dbReference>
<dbReference type="PROSITE" id="PS50297">
    <property type="entry name" value="ANK_REP_REGION"/>
    <property type="match status" value="1"/>
</dbReference>
<dbReference type="PROSITE" id="PS50088">
    <property type="entry name" value="ANK_REPEAT"/>
    <property type="match status" value="1"/>
</dbReference>
<proteinExistence type="inferred from homology"/>
<feature type="chain" id="PRO_0000373274" description="Protein MGF 360-10L">
    <location>
        <begin position="1"/>
        <end position="356"/>
    </location>
</feature>
<feature type="transmembrane region" description="Helical" evidence="2">
    <location>
        <begin position="249"/>
        <end position="271"/>
    </location>
</feature>
<feature type="repeat" description="ANK">
    <location>
        <begin position="57"/>
        <end position="89"/>
    </location>
</feature>
<feature type="glycosylation site" description="N-linked (GlcNAc...) asparagine; by host" evidence="2">
    <location>
        <position position="172"/>
    </location>
</feature>
<feature type="glycosylation site" description="N-linked (GlcNAc...) asparagine; by host" evidence="2">
    <location>
        <position position="352"/>
    </location>
</feature>
<feature type="glycosylation site" description="N-linked (GlcNAc...) asparagine; by host" evidence="2">
    <location>
        <position position="353"/>
    </location>
</feature>
<evidence type="ECO:0000250" key="1"/>
<evidence type="ECO:0000255" key="2"/>
<evidence type="ECO:0000305" key="3"/>
<keyword id="KW-0040">ANK repeat</keyword>
<keyword id="KW-0325">Glycoprotein</keyword>
<keyword id="KW-1043">Host membrane</keyword>
<keyword id="KW-0472">Membrane</keyword>
<keyword id="KW-0812">Transmembrane</keyword>
<keyword id="KW-1133">Transmembrane helix</keyword>
<gene>
    <name type="ordered locus">Pret-032</name>
</gene>
<protein>
    <recommendedName>
        <fullName>Protein MGF 360-10L</fullName>
    </recommendedName>
</protein>
<sequence>MFPSLQSFAKKVLARQHVSIDHHIILERCGLWWYKAPISLDCKHMLIKLPNFADGLDLNTALMLATKENNYQLIKMFTDWGADINYGLICANTPPVREFCWELGAKYQVDKKKIMHIFFKLIHPSTTSSNIILCLKLFNDNPFSAYVIIREIKSCIHWKLKKLAEDTNVLSNISDGDMLTIYCFIVALQDNLREAISYVYQHFKYLNTWWLTCVLCYNKVFDLHHLYEKEKIRMDMDEMMRIACTKDNNFLTIYYCFILGANINLAMIASIQFYNIDNLFFCIDLGADAFEEAKALAEQRNYFLISHCLSLDIYSPDSSLLTLKEADPNKIYHLLKNYKSKSILAYLNYDVNNTTL</sequence>
<organism>
    <name type="scientific">African swine fever virus (isolate Tick/South Africa/Pretoriuskop Pr4/1996)</name>
    <name type="common">ASFV</name>
    <dbReference type="NCBI Taxonomy" id="561443"/>
    <lineage>
        <taxon>Viruses</taxon>
        <taxon>Varidnaviria</taxon>
        <taxon>Bamfordvirae</taxon>
        <taxon>Nucleocytoviricota</taxon>
        <taxon>Pokkesviricetes</taxon>
        <taxon>Asfuvirales</taxon>
        <taxon>Asfarviridae</taxon>
        <taxon>Asfivirus</taxon>
        <taxon>African swine fever virus</taxon>
    </lineage>
</organism>
<comment type="function">
    <text evidence="1">Plays a role in virus cell tropism, and may be required for efficient virus replication in macrophages.</text>
</comment>
<comment type="subcellular location">
    <subcellularLocation>
        <location evidence="3">Host membrane</location>
        <topology evidence="3">Single-pass membrane protein</topology>
    </subcellularLocation>
</comment>
<comment type="similarity">
    <text evidence="3">Belongs to the asfivirus MGF 360 family.</text>
</comment>
<accession>P0C9P5</accession>
<reference key="1">
    <citation type="submission" date="2003-03" db="EMBL/GenBank/DDBJ databases">
        <title>African swine fever virus genomes.</title>
        <authorList>
            <person name="Kutish G.F."/>
            <person name="Rock D.L."/>
        </authorList>
    </citation>
    <scope>NUCLEOTIDE SEQUENCE [LARGE SCALE GENOMIC DNA]</scope>
</reference>
<organismHost>
    <name type="scientific">Ornithodoros</name>
    <name type="common">relapsing fever ticks</name>
    <dbReference type="NCBI Taxonomy" id="6937"/>
</organismHost>
<organismHost>
    <name type="scientific">Phacochoerus aethiopicus</name>
    <name type="common">Warthog</name>
    <dbReference type="NCBI Taxonomy" id="85517"/>
</organismHost>
<organismHost>
    <name type="scientific">Phacochoerus africanus</name>
    <name type="common">Warthog</name>
    <dbReference type="NCBI Taxonomy" id="41426"/>
</organismHost>
<organismHost>
    <name type="scientific">Potamochoerus larvatus</name>
    <name type="common">Bushpig</name>
    <dbReference type="NCBI Taxonomy" id="273792"/>
</organismHost>
<organismHost>
    <name type="scientific">Sus scrofa</name>
    <name type="common">Pig</name>
    <dbReference type="NCBI Taxonomy" id="9823"/>
</organismHost>